<feature type="chain" id="PRO_1000085450" description="Flagellar assembly factor FliW">
    <location>
        <begin position="1"/>
        <end position="141"/>
    </location>
</feature>
<gene>
    <name evidence="1" type="primary">fliW</name>
    <name type="ordered locus">Cbei_4296</name>
</gene>
<keyword id="KW-1005">Bacterial flagellum biogenesis</keyword>
<keyword id="KW-0143">Chaperone</keyword>
<keyword id="KW-0963">Cytoplasm</keyword>
<keyword id="KW-0810">Translation regulation</keyword>
<protein>
    <recommendedName>
        <fullName evidence="1">Flagellar assembly factor FliW</fullName>
    </recommendedName>
</protein>
<name>FLIW_CLOB8</name>
<organism>
    <name type="scientific">Clostridium beijerinckii (strain ATCC 51743 / NCIMB 8052)</name>
    <name type="common">Clostridium acetobutylicum</name>
    <dbReference type="NCBI Taxonomy" id="290402"/>
    <lineage>
        <taxon>Bacteria</taxon>
        <taxon>Bacillati</taxon>
        <taxon>Bacillota</taxon>
        <taxon>Clostridia</taxon>
        <taxon>Eubacteriales</taxon>
        <taxon>Clostridiaceae</taxon>
        <taxon>Clostridium</taxon>
    </lineage>
</organism>
<sequence length="141" mass="16220">MKFISKVHGEITYDEKNIIIFNKGILGFDELKRFILIELEEYEPFKLLHSLEDDGVGLIVTSPYDFFEDYELKLSEDIINNLKIEMPKDVMVITTITLNSEAKKITTNLQGPIIINISNNLGEQIILDNSKYKIKQPLIGE</sequence>
<dbReference type="EMBL" id="CP000721">
    <property type="protein sequence ID" value="ABR36406.1"/>
    <property type="molecule type" value="Genomic_DNA"/>
</dbReference>
<dbReference type="RefSeq" id="WP_012060453.1">
    <property type="nucleotide sequence ID" value="NC_009617.1"/>
</dbReference>
<dbReference type="SMR" id="A6M1C6"/>
<dbReference type="KEGG" id="cbe:Cbei_4296"/>
<dbReference type="eggNOG" id="COG1699">
    <property type="taxonomic scope" value="Bacteria"/>
</dbReference>
<dbReference type="HOGENOM" id="CLU_112356_0_2_9"/>
<dbReference type="Proteomes" id="UP000000565">
    <property type="component" value="Chromosome"/>
</dbReference>
<dbReference type="GO" id="GO:0005737">
    <property type="term" value="C:cytoplasm"/>
    <property type="evidence" value="ECO:0007669"/>
    <property type="project" value="UniProtKB-SubCell"/>
</dbReference>
<dbReference type="GO" id="GO:0044780">
    <property type="term" value="P:bacterial-type flagellum assembly"/>
    <property type="evidence" value="ECO:0007669"/>
    <property type="project" value="UniProtKB-UniRule"/>
</dbReference>
<dbReference type="GO" id="GO:0006417">
    <property type="term" value="P:regulation of translation"/>
    <property type="evidence" value="ECO:0007669"/>
    <property type="project" value="UniProtKB-KW"/>
</dbReference>
<dbReference type="Gene3D" id="2.30.290.10">
    <property type="entry name" value="BH3618-like"/>
    <property type="match status" value="1"/>
</dbReference>
<dbReference type="HAMAP" id="MF_01185">
    <property type="entry name" value="FliW"/>
    <property type="match status" value="1"/>
</dbReference>
<dbReference type="InterPro" id="IPR003775">
    <property type="entry name" value="Flagellar_assembly_factor_FliW"/>
</dbReference>
<dbReference type="InterPro" id="IPR024046">
    <property type="entry name" value="Flagellar_assmbl_FliW_dom_sf"/>
</dbReference>
<dbReference type="NCBIfam" id="NF009793">
    <property type="entry name" value="PRK13285.1-1"/>
    <property type="match status" value="1"/>
</dbReference>
<dbReference type="PANTHER" id="PTHR39190">
    <property type="entry name" value="FLAGELLAR ASSEMBLY FACTOR FLIW"/>
    <property type="match status" value="1"/>
</dbReference>
<dbReference type="PANTHER" id="PTHR39190:SF1">
    <property type="entry name" value="FLAGELLAR ASSEMBLY FACTOR FLIW"/>
    <property type="match status" value="1"/>
</dbReference>
<dbReference type="Pfam" id="PF02623">
    <property type="entry name" value="FliW"/>
    <property type="match status" value="1"/>
</dbReference>
<dbReference type="SUPFAM" id="SSF141457">
    <property type="entry name" value="BH3618-like"/>
    <property type="match status" value="1"/>
</dbReference>
<reference key="1">
    <citation type="submission" date="2007-06" db="EMBL/GenBank/DDBJ databases">
        <title>Complete sequence of Clostridium beijerinckii NCIMB 8052.</title>
        <authorList>
            <consortium name="US DOE Joint Genome Institute"/>
            <person name="Copeland A."/>
            <person name="Lucas S."/>
            <person name="Lapidus A."/>
            <person name="Barry K."/>
            <person name="Detter J.C."/>
            <person name="Glavina del Rio T."/>
            <person name="Hammon N."/>
            <person name="Israni S."/>
            <person name="Dalin E."/>
            <person name="Tice H."/>
            <person name="Pitluck S."/>
            <person name="Sims D."/>
            <person name="Brettin T."/>
            <person name="Bruce D."/>
            <person name="Tapia R."/>
            <person name="Brainard J."/>
            <person name="Schmutz J."/>
            <person name="Larimer F."/>
            <person name="Land M."/>
            <person name="Hauser L."/>
            <person name="Kyrpides N."/>
            <person name="Mikhailova N."/>
            <person name="Bennet G."/>
            <person name="Cann I."/>
            <person name="Chen J.-S."/>
            <person name="Contreras A.L."/>
            <person name="Jones D."/>
            <person name="Kashket E."/>
            <person name="Mitchell W."/>
            <person name="Stoddard S."/>
            <person name="Schwarz W."/>
            <person name="Qureshi N."/>
            <person name="Young M."/>
            <person name="Shi Z."/>
            <person name="Ezeji T."/>
            <person name="White B."/>
            <person name="Blaschek H."/>
            <person name="Richardson P."/>
        </authorList>
    </citation>
    <scope>NUCLEOTIDE SEQUENCE [LARGE SCALE GENOMIC DNA]</scope>
    <source>
        <strain>ATCC 51743 / NCIMB 8052</strain>
    </source>
</reference>
<comment type="function">
    <text evidence="1">Acts as an anti-CsrA protein, binds CsrA and prevents it from repressing translation of its target genes, one of which is flagellin. Binds to flagellin and participates in the assembly of the flagellum.</text>
</comment>
<comment type="subunit">
    <text evidence="1">Interacts with translational regulator CsrA and flagellin(s).</text>
</comment>
<comment type="subcellular location">
    <subcellularLocation>
        <location evidence="1">Cytoplasm</location>
    </subcellularLocation>
</comment>
<comment type="similarity">
    <text evidence="1">Belongs to the FliW family.</text>
</comment>
<proteinExistence type="inferred from homology"/>
<accession>A6M1C6</accession>
<evidence type="ECO:0000255" key="1">
    <source>
        <dbReference type="HAMAP-Rule" id="MF_01185"/>
    </source>
</evidence>